<proteinExistence type="inferred from homology"/>
<evidence type="ECO:0000255" key="1">
    <source>
        <dbReference type="HAMAP-Rule" id="MF_00550"/>
    </source>
</evidence>
<dbReference type="EC" id="3.4.11.4" evidence="1"/>
<dbReference type="EMBL" id="CP000821">
    <property type="protein sequence ID" value="ABV38610.1"/>
    <property type="molecule type" value="Genomic_DNA"/>
</dbReference>
<dbReference type="RefSeq" id="WP_012144340.1">
    <property type="nucleotide sequence ID" value="NC_009831.1"/>
</dbReference>
<dbReference type="SMR" id="A8G0I7"/>
<dbReference type="STRING" id="425104.Ssed_4006"/>
<dbReference type="MEROPS" id="M20.003"/>
<dbReference type="KEGG" id="sse:Ssed_4006"/>
<dbReference type="eggNOG" id="COG2195">
    <property type="taxonomic scope" value="Bacteria"/>
</dbReference>
<dbReference type="HOGENOM" id="CLU_053676_0_0_6"/>
<dbReference type="OrthoDB" id="9804934at2"/>
<dbReference type="Proteomes" id="UP000002015">
    <property type="component" value="Chromosome"/>
</dbReference>
<dbReference type="GO" id="GO:0005829">
    <property type="term" value="C:cytosol"/>
    <property type="evidence" value="ECO:0007669"/>
    <property type="project" value="TreeGrafter"/>
</dbReference>
<dbReference type="GO" id="GO:0008237">
    <property type="term" value="F:metallopeptidase activity"/>
    <property type="evidence" value="ECO:0007669"/>
    <property type="project" value="UniProtKB-KW"/>
</dbReference>
<dbReference type="GO" id="GO:0045148">
    <property type="term" value="F:tripeptide aminopeptidase activity"/>
    <property type="evidence" value="ECO:0007669"/>
    <property type="project" value="UniProtKB-UniRule"/>
</dbReference>
<dbReference type="GO" id="GO:0008270">
    <property type="term" value="F:zinc ion binding"/>
    <property type="evidence" value="ECO:0007669"/>
    <property type="project" value="UniProtKB-UniRule"/>
</dbReference>
<dbReference type="GO" id="GO:0043171">
    <property type="term" value="P:peptide catabolic process"/>
    <property type="evidence" value="ECO:0007669"/>
    <property type="project" value="UniProtKB-UniRule"/>
</dbReference>
<dbReference type="GO" id="GO:0006508">
    <property type="term" value="P:proteolysis"/>
    <property type="evidence" value="ECO:0007669"/>
    <property type="project" value="UniProtKB-UniRule"/>
</dbReference>
<dbReference type="CDD" id="cd03892">
    <property type="entry name" value="M20_peptT"/>
    <property type="match status" value="1"/>
</dbReference>
<dbReference type="Gene3D" id="3.30.70.360">
    <property type="match status" value="1"/>
</dbReference>
<dbReference type="Gene3D" id="3.40.630.10">
    <property type="entry name" value="Zn peptidases"/>
    <property type="match status" value="1"/>
</dbReference>
<dbReference type="HAMAP" id="MF_00550">
    <property type="entry name" value="Aminopeptidase_M20"/>
    <property type="match status" value="1"/>
</dbReference>
<dbReference type="InterPro" id="IPR001261">
    <property type="entry name" value="ArgE/DapE_CS"/>
</dbReference>
<dbReference type="InterPro" id="IPR036264">
    <property type="entry name" value="Bact_exopeptidase_dim_dom"/>
</dbReference>
<dbReference type="InterPro" id="IPR002933">
    <property type="entry name" value="Peptidase_M20"/>
</dbReference>
<dbReference type="InterPro" id="IPR011650">
    <property type="entry name" value="Peptidase_M20_dimer"/>
</dbReference>
<dbReference type="InterPro" id="IPR010161">
    <property type="entry name" value="Peptidase_M20B"/>
</dbReference>
<dbReference type="NCBIfam" id="TIGR01882">
    <property type="entry name" value="peptidase-T"/>
    <property type="match status" value="1"/>
</dbReference>
<dbReference type="NCBIfam" id="NF003976">
    <property type="entry name" value="PRK05469.1"/>
    <property type="match status" value="1"/>
</dbReference>
<dbReference type="NCBIfam" id="NF009920">
    <property type="entry name" value="PRK13381.1"/>
    <property type="match status" value="1"/>
</dbReference>
<dbReference type="PANTHER" id="PTHR42994">
    <property type="entry name" value="PEPTIDASE T"/>
    <property type="match status" value="1"/>
</dbReference>
<dbReference type="PANTHER" id="PTHR42994:SF1">
    <property type="entry name" value="PEPTIDASE T"/>
    <property type="match status" value="1"/>
</dbReference>
<dbReference type="Pfam" id="PF07687">
    <property type="entry name" value="M20_dimer"/>
    <property type="match status" value="1"/>
</dbReference>
<dbReference type="Pfam" id="PF01546">
    <property type="entry name" value="Peptidase_M20"/>
    <property type="match status" value="1"/>
</dbReference>
<dbReference type="PIRSF" id="PIRSF037215">
    <property type="entry name" value="Peptidase_M20B"/>
    <property type="match status" value="1"/>
</dbReference>
<dbReference type="SUPFAM" id="SSF55031">
    <property type="entry name" value="Bacterial exopeptidase dimerisation domain"/>
    <property type="match status" value="1"/>
</dbReference>
<dbReference type="SUPFAM" id="SSF53187">
    <property type="entry name" value="Zn-dependent exopeptidases"/>
    <property type="match status" value="1"/>
</dbReference>
<dbReference type="PROSITE" id="PS00758">
    <property type="entry name" value="ARGE_DAPE_CPG2_1"/>
    <property type="match status" value="1"/>
</dbReference>
<keyword id="KW-0031">Aminopeptidase</keyword>
<keyword id="KW-0963">Cytoplasm</keyword>
<keyword id="KW-0378">Hydrolase</keyword>
<keyword id="KW-0479">Metal-binding</keyword>
<keyword id="KW-0482">Metalloprotease</keyword>
<keyword id="KW-0645">Protease</keyword>
<keyword id="KW-1185">Reference proteome</keyword>
<keyword id="KW-0862">Zinc</keyword>
<gene>
    <name evidence="1" type="primary">pepT</name>
    <name type="ordered locus">Ssed_4006</name>
</gene>
<comment type="function">
    <text evidence="1">Cleaves the N-terminal amino acid of tripeptides.</text>
</comment>
<comment type="catalytic activity">
    <reaction evidence="1">
        <text>Release of the N-terminal residue from a tripeptide.</text>
        <dbReference type="EC" id="3.4.11.4"/>
    </reaction>
</comment>
<comment type="cofactor">
    <cofactor evidence="1">
        <name>Zn(2+)</name>
        <dbReference type="ChEBI" id="CHEBI:29105"/>
    </cofactor>
    <text evidence="1">Binds 2 Zn(2+) ions per subunit.</text>
</comment>
<comment type="subcellular location">
    <subcellularLocation>
        <location evidence="1">Cytoplasm</location>
    </subcellularLocation>
</comment>
<comment type="similarity">
    <text evidence="1">Belongs to the peptidase M20B family.</text>
</comment>
<reference key="1">
    <citation type="submission" date="2007-08" db="EMBL/GenBank/DDBJ databases">
        <title>Complete sequence of Shewanella sediminis HAW-EB3.</title>
        <authorList>
            <consortium name="US DOE Joint Genome Institute"/>
            <person name="Copeland A."/>
            <person name="Lucas S."/>
            <person name="Lapidus A."/>
            <person name="Barry K."/>
            <person name="Glavina del Rio T."/>
            <person name="Dalin E."/>
            <person name="Tice H."/>
            <person name="Pitluck S."/>
            <person name="Chertkov O."/>
            <person name="Brettin T."/>
            <person name="Bruce D."/>
            <person name="Detter J.C."/>
            <person name="Han C."/>
            <person name="Schmutz J."/>
            <person name="Larimer F."/>
            <person name="Land M."/>
            <person name="Hauser L."/>
            <person name="Kyrpides N."/>
            <person name="Kim E."/>
            <person name="Zhao J.-S."/>
            <person name="Richardson P."/>
        </authorList>
    </citation>
    <scope>NUCLEOTIDE SEQUENCE [LARGE SCALE GENOMIC DNA]</scope>
    <source>
        <strain>HAW-EB3</strain>
    </source>
</reference>
<name>PEPT_SHESH</name>
<protein>
    <recommendedName>
        <fullName evidence="1">Peptidase T</fullName>
        <ecNumber evidence="1">3.4.11.4</ecNumber>
    </recommendedName>
    <alternativeName>
        <fullName evidence="1">Aminotripeptidase</fullName>
        <shortName evidence="1">Tripeptidase</shortName>
    </alternativeName>
    <alternativeName>
        <fullName evidence="1">Tripeptide aminopeptidase</fullName>
    </alternativeName>
</protein>
<accession>A8G0I7</accession>
<feature type="chain" id="PRO_1000200895" description="Peptidase T">
    <location>
        <begin position="1"/>
        <end position="409"/>
    </location>
</feature>
<feature type="active site" evidence="1">
    <location>
        <position position="80"/>
    </location>
</feature>
<feature type="active site" description="Proton acceptor" evidence="1">
    <location>
        <position position="173"/>
    </location>
</feature>
<feature type="binding site" evidence="1">
    <location>
        <position position="78"/>
    </location>
    <ligand>
        <name>Zn(2+)</name>
        <dbReference type="ChEBI" id="CHEBI:29105"/>
        <label>1</label>
    </ligand>
</feature>
<feature type="binding site" evidence="1">
    <location>
        <position position="139"/>
    </location>
    <ligand>
        <name>Zn(2+)</name>
        <dbReference type="ChEBI" id="CHEBI:29105"/>
        <label>1</label>
    </ligand>
</feature>
<feature type="binding site" evidence="1">
    <location>
        <position position="139"/>
    </location>
    <ligand>
        <name>Zn(2+)</name>
        <dbReference type="ChEBI" id="CHEBI:29105"/>
        <label>2</label>
    </ligand>
</feature>
<feature type="binding site" evidence="1">
    <location>
        <position position="174"/>
    </location>
    <ligand>
        <name>Zn(2+)</name>
        <dbReference type="ChEBI" id="CHEBI:29105"/>
        <label>2</label>
    </ligand>
</feature>
<feature type="binding site" evidence="1">
    <location>
        <position position="196"/>
    </location>
    <ligand>
        <name>Zn(2+)</name>
        <dbReference type="ChEBI" id="CHEBI:29105"/>
        <label>1</label>
    </ligand>
</feature>
<feature type="binding site" evidence="1">
    <location>
        <position position="378"/>
    </location>
    <ligand>
        <name>Zn(2+)</name>
        <dbReference type="ChEBI" id="CHEBI:29105"/>
        <label>2</label>
    </ligand>
</feature>
<organism>
    <name type="scientific">Shewanella sediminis (strain HAW-EB3)</name>
    <dbReference type="NCBI Taxonomy" id="425104"/>
    <lineage>
        <taxon>Bacteria</taxon>
        <taxon>Pseudomonadati</taxon>
        <taxon>Pseudomonadota</taxon>
        <taxon>Gammaproteobacteria</taxon>
        <taxon>Alteromonadales</taxon>
        <taxon>Shewanellaceae</taxon>
        <taxon>Shewanella</taxon>
    </lineage>
</organism>
<sequence>MRQALLERFLRYIKIDTQSDGKNLESPSTPSQFEFAKLLKLELEELGFHRVELSDKGYLSASVPKTIEGVPCIGFIAHLDTAPDFSGANVTPQLINDYDGSEIKLGEDEVLSPELFPHMLKYLGKTLITTDGTSLLGGDDKAGISEIITALHYLLEHPEIPHGEIRLCFTPDEEIGRGADHFDVPEFGAQWAYTIDGGQLGELEFENFNAATAVITAKGNNCHPGTAYGVMVNAQTMAARFHAKMPLHDTPEGSKDYDGFFHLINMQGQTEEAELTYIIRDFDLELFEKRKTWLTERVKSYNADLVLGSLEIEITDSYFNMKEQILPYPHIIDIAEKAITNQGVTPLIKPIRGGTDGSRLSYMGLPCPNIFTGGHNFHGKHEYICLESMEKAVDVIIDICKLTAEEQQA</sequence>